<protein>
    <recommendedName>
        <fullName evidence="1">ATP synthase gamma chain</fullName>
    </recommendedName>
    <alternativeName>
        <fullName evidence="1">ATP synthase F1 sector gamma subunit</fullName>
    </alternativeName>
    <alternativeName>
        <fullName evidence="1">F-ATPase gamma subunit</fullName>
    </alternativeName>
</protein>
<sequence length="286" mass="31553">MAGAKEIRSKIASIKSTQKITNAMEKVAVSKMRKAQMRMAAGRPYAERIRQVIGHLANANPEYRHPFMVEREVKRVGYIVVSSDRGLCGGLNINLFKSLVKDMSGYREQGAEIDLCVIGSKGASFFRSFGGNVVAAISHLGEEPSINDLIGSVKVMLDAYLEGRIDRLFVVSNKFVNTMTQKPTVEQLIPLVADDDQELKHHWDYLYEPDAKSLLDGLLVRYVESQVYQAVVENNACEQAARMIAMKNATDNAGELISDLQLIYNKARQAAITQEISEIVGGAAAV</sequence>
<dbReference type="EMBL" id="CP000744">
    <property type="protein sequence ID" value="ABR86348.1"/>
    <property type="molecule type" value="Genomic_DNA"/>
</dbReference>
<dbReference type="RefSeq" id="WP_003097132.1">
    <property type="nucleotide sequence ID" value="NC_009656.1"/>
</dbReference>
<dbReference type="SMR" id="A6VF33"/>
<dbReference type="GeneID" id="77224108"/>
<dbReference type="KEGG" id="pap:PSPA7_6357"/>
<dbReference type="HOGENOM" id="CLU_050669_0_1_6"/>
<dbReference type="Proteomes" id="UP000001582">
    <property type="component" value="Chromosome"/>
</dbReference>
<dbReference type="GO" id="GO:0005886">
    <property type="term" value="C:plasma membrane"/>
    <property type="evidence" value="ECO:0007669"/>
    <property type="project" value="UniProtKB-SubCell"/>
</dbReference>
<dbReference type="GO" id="GO:0045259">
    <property type="term" value="C:proton-transporting ATP synthase complex"/>
    <property type="evidence" value="ECO:0007669"/>
    <property type="project" value="UniProtKB-KW"/>
</dbReference>
<dbReference type="GO" id="GO:0005524">
    <property type="term" value="F:ATP binding"/>
    <property type="evidence" value="ECO:0007669"/>
    <property type="project" value="UniProtKB-UniRule"/>
</dbReference>
<dbReference type="GO" id="GO:0046933">
    <property type="term" value="F:proton-transporting ATP synthase activity, rotational mechanism"/>
    <property type="evidence" value="ECO:0007669"/>
    <property type="project" value="UniProtKB-UniRule"/>
</dbReference>
<dbReference type="GO" id="GO:0042777">
    <property type="term" value="P:proton motive force-driven plasma membrane ATP synthesis"/>
    <property type="evidence" value="ECO:0007669"/>
    <property type="project" value="UniProtKB-UniRule"/>
</dbReference>
<dbReference type="CDD" id="cd12151">
    <property type="entry name" value="F1-ATPase_gamma"/>
    <property type="match status" value="1"/>
</dbReference>
<dbReference type="FunFam" id="1.10.287.80:FF:000005">
    <property type="entry name" value="ATP synthase gamma chain"/>
    <property type="match status" value="1"/>
</dbReference>
<dbReference type="FunFam" id="3.40.1380.10:FF:000001">
    <property type="entry name" value="ATP synthase gamma chain"/>
    <property type="match status" value="1"/>
</dbReference>
<dbReference type="Gene3D" id="3.40.1380.10">
    <property type="match status" value="1"/>
</dbReference>
<dbReference type="Gene3D" id="1.10.287.80">
    <property type="entry name" value="ATP synthase, gamma subunit, helix hairpin domain"/>
    <property type="match status" value="1"/>
</dbReference>
<dbReference type="HAMAP" id="MF_00815">
    <property type="entry name" value="ATP_synth_gamma_bact"/>
    <property type="match status" value="1"/>
</dbReference>
<dbReference type="InterPro" id="IPR035968">
    <property type="entry name" value="ATP_synth_F1_ATPase_gsu"/>
</dbReference>
<dbReference type="InterPro" id="IPR000131">
    <property type="entry name" value="ATP_synth_F1_gsu"/>
</dbReference>
<dbReference type="InterPro" id="IPR023632">
    <property type="entry name" value="ATP_synth_F1_gsu_CS"/>
</dbReference>
<dbReference type="NCBIfam" id="TIGR01146">
    <property type="entry name" value="ATPsyn_F1gamma"/>
    <property type="match status" value="1"/>
</dbReference>
<dbReference type="NCBIfam" id="NF004144">
    <property type="entry name" value="PRK05621.1-1"/>
    <property type="match status" value="1"/>
</dbReference>
<dbReference type="PANTHER" id="PTHR11693">
    <property type="entry name" value="ATP SYNTHASE GAMMA CHAIN"/>
    <property type="match status" value="1"/>
</dbReference>
<dbReference type="PANTHER" id="PTHR11693:SF22">
    <property type="entry name" value="ATP SYNTHASE SUBUNIT GAMMA, MITOCHONDRIAL"/>
    <property type="match status" value="1"/>
</dbReference>
<dbReference type="Pfam" id="PF00231">
    <property type="entry name" value="ATP-synt"/>
    <property type="match status" value="1"/>
</dbReference>
<dbReference type="PRINTS" id="PR00126">
    <property type="entry name" value="ATPASEGAMMA"/>
</dbReference>
<dbReference type="SUPFAM" id="SSF52943">
    <property type="entry name" value="ATP synthase (F1-ATPase), gamma subunit"/>
    <property type="match status" value="1"/>
</dbReference>
<dbReference type="PROSITE" id="PS00153">
    <property type="entry name" value="ATPASE_GAMMA"/>
    <property type="match status" value="1"/>
</dbReference>
<comment type="function">
    <text evidence="1">Produces ATP from ADP in the presence of a proton gradient across the membrane. The gamma chain is believed to be important in regulating ATPase activity and the flow of protons through the CF(0) complex.</text>
</comment>
<comment type="subunit">
    <text evidence="1">F-type ATPases have 2 components, CF(1) - the catalytic core - and CF(0) - the membrane proton channel. CF(1) has five subunits: alpha(3), beta(3), gamma(1), delta(1), epsilon(1). CF(0) has three main subunits: a, b and c.</text>
</comment>
<comment type="subcellular location">
    <subcellularLocation>
        <location evidence="1">Cell inner membrane</location>
        <topology evidence="1">Peripheral membrane protein</topology>
    </subcellularLocation>
</comment>
<comment type="similarity">
    <text evidence="1">Belongs to the ATPase gamma chain family.</text>
</comment>
<organism>
    <name type="scientific">Pseudomonas paraeruginosa (strain DSM 24068 / PA7)</name>
    <name type="common">Pseudomonas aeruginosa (strain PA7)</name>
    <dbReference type="NCBI Taxonomy" id="381754"/>
    <lineage>
        <taxon>Bacteria</taxon>
        <taxon>Pseudomonadati</taxon>
        <taxon>Pseudomonadota</taxon>
        <taxon>Gammaproteobacteria</taxon>
        <taxon>Pseudomonadales</taxon>
        <taxon>Pseudomonadaceae</taxon>
        <taxon>Pseudomonas</taxon>
        <taxon>Pseudomonas paraeruginosa</taxon>
    </lineage>
</organism>
<keyword id="KW-0066">ATP synthesis</keyword>
<keyword id="KW-0997">Cell inner membrane</keyword>
<keyword id="KW-1003">Cell membrane</keyword>
<keyword id="KW-0139">CF(1)</keyword>
<keyword id="KW-0375">Hydrogen ion transport</keyword>
<keyword id="KW-0406">Ion transport</keyword>
<keyword id="KW-0472">Membrane</keyword>
<keyword id="KW-0813">Transport</keyword>
<accession>A6VF33</accession>
<name>ATPG_PSEP7</name>
<gene>
    <name evidence="1" type="primary">atpG</name>
    <name type="ordered locus">PSPA7_6357</name>
</gene>
<proteinExistence type="inferred from homology"/>
<reference key="1">
    <citation type="submission" date="2007-06" db="EMBL/GenBank/DDBJ databases">
        <authorList>
            <person name="Dodson R.J."/>
            <person name="Harkins D."/>
            <person name="Paulsen I.T."/>
        </authorList>
    </citation>
    <scope>NUCLEOTIDE SEQUENCE [LARGE SCALE GENOMIC DNA]</scope>
    <source>
        <strain>DSM 24068 / PA7</strain>
    </source>
</reference>
<evidence type="ECO:0000255" key="1">
    <source>
        <dbReference type="HAMAP-Rule" id="MF_00815"/>
    </source>
</evidence>
<feature type="chain" id="PRO_1000053290" description="ATP synthase gamma chain">
    <location>
        <begin position="1"/>
        <end position="286"/>
    </location>
</feature>